<reference key="1">
    <citation type="journal article" date="2010" name="Science">
        <title>The genome of the Western clawed frog Xenopus tropicalis.</title>
        <authorList>
            <person name="Hellsten U."/>
            <person name="Harland R.M."/>
            <person name="Gilchrist M.J."/>
            <person name="Hendrix D."/>
            <person name="Jurka J."/>
            <person name="Kapitonov V."/>
            <person name="Ovcharenko I."/>
            <person name="Putnam N.H."/>
            <person name="Shu S."/>
            <person name="Taher L."/>
            <person name="Blitz I.L."/>
            <person name="Blumberg B."/>
            <person name="Dichmann D.S."/>
            <person name="Dubchak I."/>
            <person name="Amaya E."/>
            <person name="Detter J.C."/>
            <person name="Fletcher R."/>
            <person name="Gerhard D.S."/>
            <person name="Goodstein D."/>
            <person name="Graves T."/>
            <person name="Grigoriev I.V."/>
            <person name="Grimwood J."/>
            <person name="Kawashima T."/>
            <person name="Lindquist E."/>
            <person name="Lucas S.M."/>
            <person name="Mead P.E."/>
            <person name="Mitros T."/>
            <person name="Ogino H."/>
            <person name="Ohta Y."/>
            <person name="Poliakov A.V."/>
            <person name="Pollet N."/>
            <person name="Robert J."/>
            <person name="Salamov A."/>
            <person name="Sater A.K."/>
            <person name="Schmutz J."/>
            <person name="Terry A."/>
            <person name="Vize P.D."/>
            <person name="Warren W.C."/>
            <person name="Wells D."/>
            <person name="Wills A."/>
            <person name="Wilson R.K."/>
            <person name="Zimmerman L.B."/>
            <person name="Zorn A.M."/>
            <person name="Grainger R."/>
            <person name="Grammer T."/>
            <person name="Khokha M.K."/>
            <person name="Richardson P.M."/>
            <person name="Rokhsar D.S."/>
        </authorList>
    </citation>
    <scope>NUCLEOTIDE SEQUENCE [LARGE SCALE GENOMIC DNA]</scope>
</reference>
<reference key="2">
    <citation type="submission" date="2005-01" db="EMBL/GenBank/DDBJ databases">
        <authorList>
            <consortium name="NIH - Xenopus Gene Collection (XGC) project"/>
        </authorList>
    </citation>
    <scope>NUCLEOTIDE SEQUENCE [LARGE SCALE MRNA]</scope>
</reference>
<proteinExistence type="evidence at transcript level"/>
<accession>Q5FWR0</accession>
<accession>F6W182</accession>
<accession>F7CJC9</accession>
<name>SMRCD_XENTR</name>
<keyword id="KW-0067">ATP-binding</keyword>
<keyword id="KW-0156">Chromatin regulator</keyword>
<keyword id="KW-0158">Chromosome</keyword>
<keyword id="KW-0227">DNA damage</keyword>
<keyword id="KW-0234">DNA repair</keyword>
<keyword id="KW-0238">DNA-binding</keyword>
<keyword id="KW-0347">Helicase</keyword>
<keyword id="KW-0378">Hydrolase</keyword>
<keyword id="KW-0547">Nucleotide-binding</keyword>
<keyword id="KW-0539">Nucleus</keyword>
<keyword id="KW-1185">Reference proteome</keyword>
<gene>
    <name type="primary">smarcad1</name>
</gene>
<comment type="function">
    <text evidence="1">DNA helicase that possesses intrinsic ATP-dependent nucleosome-remodeling activity and is both required for DNA repair and heterochromatin organization. Promotes DNA end resection of double-strand breaks (DSBs) following DNA damage: probably acts by weakening histone DNA interactions in nucleosomes flanking DSBs. Required for the restoration of heterochromatin organization after replication (By similarity).</text>
</comment>
<comment type="catalytic activity">
    <reaction evidence="1">
        <text>ATP + H2O = ADP + phosphate + H(+)</text>
        <dbReference type="Rhea" id="RHEA:13065"/>
        <dbReference type="ChEBI" id="CHEBI:15377"/>
        <dbReference type="ChEBI" id="CHEBI:15378"/>
        <dbReference type="ChEBI" id="CHEBI:30616"/>
        <dbReference type="ChEBI" id="CHEBI:43474"/>
        <dbReference type="ChEBI" id="CHEBI:456216"/>
        <dbReference type="EC" id="3.6.4.12"/>
    </reaction>
    <physiologicalReaction direction="left-to-right" evidence="1">
        <dbReference type="Rhea" id="RHEA:13066"/>
    </physiologicalReaction>
</comment>
<comment type="subcellular location">
    <subcellularLocation>
        <location evidence="1">Nucleus</location>
    </subcellularLocation>
    <subcellularLocation>
        <location evidence="1">Chromosome</location>
    </subcellularLocation>
    <text evidence="1">Colocalizes with PCNA at replication forks during S phase. Recruited to double-strand breaks (DSBs) sites of DNA damage.</text>
</comment>
<comment type="similarity">
    <text evidence="6">Belongs to the SNF2/RAD54 helicase family.</text>
</comment>
<evidence type="ECO:0000250" key="1">
    <source>
        <dbReference type="UniProtKB" id="Q9H4L7"/>
    </source>
</evidence>
<evidence type="ECO:0000255" key="2">
    <source>
        <dbReference type="PROSITE-ProRule" id="PRU00468"/>
    </source>
</evidence>
<evidence type="ECO:0000255" key="3">
    <source>
        <dbReference type="PROSITE-ProRule" id="PRU00541"/>
    </source>
</evidence>
<evidence type="ECO:0000255" key="4">
    <source>
        <dbReference type="PROSITE-ProRule" id="PRU00542"/>
    </source>
</evidence>
<evidence type="ECO:0000256" key="5">
    <source>
        <dbReference type="SAM" id="MobiDB-lite"/>
    </source>
</evidence>
<evidence type="ECO:0000305" key="6"/>
<organism>
    <name type="scientific">Xenopus tropicalis</name>
    <name type="common">Western clawed frog</name>
    <name type="synonym">Silurana tropicalis</name>
    <dbReference type="NCBI Taxonomy" id="8364"/>
    <lineage>
        <taxon>Eukaryota</taxon>
        <taxon>Metazoa</taxon>
        <taxon>Chordata</taxon>
        <taxon>Craniata</taxon>
        <taxon>Vertebrata</taxon>
        <taxon>Euteleostomi</taxon>
        <taxon>Amphibia</taxon>
        <taxon>Batrachia</taxon>
        <taxon>Anura</taxon>
        <taxon>Pipoidea</taxon>
        <taxon>Pipidae</taxon>
        <taxon>Xenopodinae</taxon>
        <taxon>Xenopus</taxon>
        <taxon>Silurana</taxon>
    </lineage>
</organism>
<feature type="chain" id="PRO_0000420486" description="SWI/SNF-related matrix-associated actin-dependent regulator of chromatin subfamily A containing DEAD/H box 1">
    <location>
        <begin position="1"/>
        <end position="1003"/>
    </location>
</feature>
<feature type="domain" description="CUE" evidence="2">
    <location>
        <begin position="221"/>
        <end position="264"/>
    </location>
</feature>
<feature type="domain" description="Helicase ATP-binding" evidence="3">
    <location>
        <begin position="486"/>
        <end position="654"/>
    </location>
</feature>
<feature type="domain" description="Helicase C-terminal" evidence="4">
    <location>
        <begin position="835"/>
        <end position="997"/>
    </location>
</feature>
<feature type="region of interest" description="Disordered" evidence="5">
    <location>
        <begin position="15"/>
        <end position="130"/>
    </location>
</feature>
<feature type="region of interest" description="Disordered" evidence="5">
    <location>
        <begin position="172"/>
        <end position="235"/>
    </location>
</feature>
<feature type="region of interest" description="Disordered" evidence="5">
    <location>
        <begin position="274"/>
        <end position="351"/>
    </location>
</feature>
<feature type="short sequence motif" description="DEGH box">
    <location>
        <begin position="605"/>
        <end position="608"/>
    </location>
</feature>
<feature type="compositionally biased region" description="Basic and acidic residues" evidence="5">
    <location>
        <begin position="172"/>
        <end position="188"/>
    </location>
</feature>
<feature type="compositionally biased region" description="Basic and acidic residues" evidence="5">
    <location>
        <begin position="221"/>
        <end position="235"/>
    </location>
</feature>
<feature type="compositionally biased region" description="Basic and acidic residues" evidence="5">
    <location>
        <begin position="274"/>
        <end position="294"/>
    </location>
</feature>
<feature type="compositionally biased region" description="Low complexity" evidence="5">
    <location>
        <begin position="295"/>
        <end position="311"/>
    </location>
</feature>
<feature type="compositionally biased region" description="Basic and acidic residues" evidence="5">
    <location>
        <begin position="321"/>
        <end position="333"/>
    </location>
</feature>
<feature type="binding site" evidence="3">
    <location>
        <begin position="499"/>
        <end position="506"/>
    </location>
    <ligand>
        <name>ATP</name>
        <dbReference type="ChEBI" id="CHEBI:30616"/>
    </ligand>
</feature>
<protein>
    <recommendedName>
        <fullName>SWI/SNF-related matrix-associated actin-dependent regulator of chromatin subfamily A containing DEAD/H box 1</fullName>
        <ecNumber>3.6.4.12</ecNumber>
    </recommendedName>
</protein>
<dbReference type="EC" id="3.6.4.12"/>
<dbReference type="EMBL" id="AAMC01061573">
    <property type="status" value="NOT_ANNOTATED_CDS"/>
    <property type="molecule type" value="Genomic_DNA"/>
</dbReference>
<dbReference type="EMBL" id="AAMC01061574">
    <property type="status" value="NOT_ANNOTATED_CDS"/>
    <property type="molecule type" value="Genomic_DNA"/>
</dbReference>
<dbReference type="EMBL" id="AAMC01061575">
    <property type="status" value="NOT_ANNOTATED_CDS"/>
    <property type="molecule type" value="Genomic_DNA"/>
</dbReference>
<dbReference type="EMBL" id="BC089242">
    <property type="protein sequence ID" value="AAH89242.1"/>
    <property type="molecule type" value="mRNA"/>
</dbReference>
<dbReference type="RefSeq" id="NP_001015697.1">
    <property type="nucleotide sequence ID" value="NM_001015697.1"/>
</dbReference>
<dbReference type="RefSeq" id="XP_017948418.1">
    <property type="nucleotide sequence ID" value="XM_018092929.2"/>
</dbReference>
<dbReference type="RefSeq" id="XP_017948421.1">
    <property type="nucleotide sequence ID" value="XM_018092932.1"/>
</dbReference>
<dbReference type="SMR" id="Q5FWR0"/>
<dbReference type="FunCoup" id="Q5FWR0">
    <property type="interactions" value="3704"/>
</dbReference>
<dbReference type="STRING" id="8364.ENSXETP00000038323"/>
<dbReference type="PaxDb" id="8364-ENSXETP00000041632"/>
<dbReference type="GeneID" id="548414"/>
<dbReference type="KEGG" id="xtr:548414"/>
<dbReference type="AGR" id="Xenbase:XB-GENE-492700"/>
<dbReference type="CTD" id="56916"/>
<dbReference type="Xenbase" id="XB-GENE-492700">
    <property type="gene designation" value="smarcad1"/>
</dbReference>
<dbReference type="eggNOG" id="KOG0389">
    <property type="taxonomic scope" value="Eukaryota"/>
</dbReference>
<dbReference type="InParanoid" id="Q5FWR0"/>
<dbReference type="OMA" id="TIENWIG"/>
<dbReference type="OrthoDB" id="448448at2759"/>
<dbReference type="Proteomes" id="UP000008143">
    <property type="component" value="Chromosome 1"/>
</dbReference>
<dbReference type="Bgee" id="ENSXETG00000019214">
    <property type="expression patterns" value="Expressed in ovary and 13 other cell types or tissues"/>
</dbReference>
<dbReference type="ExpressionAtlas" id="Q5FWR0">
    <property type="expression patterns" value="baseline"/>
</dbReference>
<dbReference type="GO" id="GO:0005634">
    <property type="term" value="C:nucleus"/>
    <property type="evidence" value="ECO:0007669"/>
    <property type="project" value="UniProtKB-SubCell"/>
</dbReference>
<dbReference type="GO" id="GO:0035861">
    <property type="term" value="C:site of double-strand break"/>
    <property type="evidence" value="ECO:0000250"/>
    <property type="project" value="UniProtKB"/>
</dbReference>
<dbReference type="GO" id="GO:0005524">
    <property type="term" value="F:ATP binding"/>
    <property type="evidence" value="ECO:0007669"/>
    <property type="project" value="UniProtKB-KW"/>
</dbReference>
<dbReference type="GO" id="GO:0016887">
    <property type="term" value="F:ATP hydrolysis activity"/>
    <property type="evidence" value="ECO:0007669"/>
    <property type="project" value="RHEA"/>
</dbReference>
<dbReference type="GO" id="GO:0140658">
    <property type="term" value="F:ATP-dependent chromatin remodeler activity"/>
    <property type="evidence" value="ECO:0000250"/>
    <property type="project" value="UniProtKB"/>
</dbReference>
<dbReference type="GO" id="GO:0003677">
    <property type="term" value="F:DNA binding"/>
    <property type="evidence" value="ECO:0007669"/>
    <property type="project" value="UniProtKB-KW"/>
</dbReference>
<dbReference type="GO" id="GO:0004386">
    <property type="term" value="F:helicase activity"/>
    <property type="evidence" value="ECO:0007669"/>
    <property type="project" value="UniProtKB-KW"/>
</dbReference>
<dbReference type="GO" id="GO:0043130">
    <property type="term" value="F:ubiquitin binding"/>
    <property type="evidence" value="ECO:0007669"/>
    <property type="project" value="InterPro"/>
</dbReference>
<dbReference type="GO" id="GO:0000729">
    <property type="term" value="P:DNA double-strand break processing"/>
    <property type="evidence" value="ECO:0000250"/>
    <property type="project" value="UniProtKB"/>
</dbReference>
<dbReference type="CDD" id="cd14279">
    <property type="entry name" value="CUE"/>
    <property type="match status" value="1"/>
</dbReference>
<dbReference type="CDD" id="cd17998">
    <property type="entry name" value="DEXHc_SMARCAD1"/>
    <property type="match status" value="1"/>
</dbReference>
<dbReference type="CDD" id="cd18793">
    <property type="entry name" value="SF2_C_SNF"/>
    <property type="match status" value="1"/>
</dbReference>
<dbReference type="FunFam" id="3.40.50.10810:FF:000014">
    <property type="entry name" value="SWI/SNF-related matrix-associated actin-dependent regulator of chromatin subfamily A containing DEAD/H box 1"/>
    <property type="match status" value="1"/>
</dbReference>
<dbReference type="FunFam" id="3.40.50.300:FF:000639">
    <property type="entry name" value="SWI/SNF-related matrix-associated actin-dependent regulator of chromatin subfamily A containing DEAD/H box 1 isoform X1"/>
    <property type="match status" value="1"/>
</dbReference>
<dbReference type="Gene3D" id="3.40.50.300">
    <property type="entry name" value="P-loop containing nucleotide triphosphate hydrolases"/>
    <property type="match status" value="1"/>
</dbReference>
<dbReference type="Gene3D" id="3.40.50.10810">
    <property type="entry name" value="Tandem AAA-ATPase domain"/>
    <property type="match status" value="1"/>
</dbReference>
<dbReference type="InterPro" id="IPR003892">
    <property type="entry name" value="CUE"/>
</dbReference>
<dbReference type="InterPro" id="IPR014001">
    <property type="entry name" value="Helicase_ATP-bd"/>
</dbReference>
<dbReference type="InterPro" id="IPR001650">
    <property type="entry name" value="Helicase_C-like"/>
</dbReference>
<dbReference type="InterPro" id="IPR027417">
    <property type="entry name" value="P-loop_NTPase"/>
</dbReference>
<dbReference type="InterPro" id="IPR038718">
    <property type="entry name" value="SNF2-like_sf"/>
</dbReference>
<dbReference type="InterPro" id="IPR049730">
    <property type="entry name" value="SNF2/RAD54-like_C"/>
</dbReference>
<dbReference type="InterPro" id="IPR000330">
    <property type="entry name" value="SNF2_N"/>
</dbReference>
<dbReference type="InterPro" id="IPR009060">
    <property type="entry name" value="UBA-like_sf"/>
</dbReference>
<dbReference type="PANTHER" id="PTHR10799">
    <property type="entry name" value="SNF2/RAD54 HELICASE FAMILY"/>
    <property type="match status" value="1"/>
</dbReference>
<dbReference type="Pfam" id="PF00271">
    <property type="entry name" value="Helicase_C"/>
    <property type="match status" value="1"/>
</dbReference>
<dbReference type="Pfam" id="PF00176">
    <property type="entry name" value="SNF2-rel_dom"/>
    <property type="match status" value="1"/>
</dbReference>
<dbReference type="SMART" id="SM00487">
    <property type="entry name" value="DEXDc"/>
    <property type="match status" value="1"/>
</dbReference>
<dbReference type="SMART" id="SM00490">
    <property type="entry name" value="HELICc"/>
    <property type="match status" value="1"/>
</dbReference>
<dbReference type="SUPFAM" id="SSF52540">
    <property type="entry name" value="P-loop containing nucleoside triphosphate hydrolases"/>
    <property type="match status" value="2"/>
</dbReference>
<dbReference type="SUPFAM" id="SSF46934">
    <property type="entry name" value="UBA-like"/>
    <property type="match status" value="1"/>
</dbReference>
<dbReference type="PROSITE" id="PS51140">
    <property type="entry name" value="CUE"/>
    <property type="match status" value="1"/>
</dbReference>
<dbReference type="PROSITE" id="PS51192">
    <property type="entry name" value="HELICASE_ATP_BIND_1"/>
    <property type="match status" value="1"/>
</dbReference>
<dbReference type="PROSITE" id="PS51194">
    <property type="entry name" value="HELICASE_CTER"/>
    <property type="match status" value="1"/>
</dbReference>
<sequence length="1003" mass="114788">MSAFNLERFRFDKGKKIDTEFGEKGASSRPSTPNSQLEDHVTSIPETPEAKRVNNPSLFKKDKGVSFLDSDSENEDHQSKSKFSSTHQQSHPREENGTSDSVTDDSEDDYLAVKRPSASTAQVKDGSKYKNLQRLKEIFPKQNNDELLKLIESTSTLDGAVAAGVVLFNKEGSSRKRKLDEVPKDSSPVHEGINGQTKKKKKIDRVSSDNDSSLSEDDWEKQEASVKKLQRHFPDLDKEELREVLQEHDWSFHEALEALKLFAEDETDALQNAAKKEVSNGKEFSRSNKNDNKSSAKAKANQNSNKAMAQNGVKKKGKGKKYSENAKRDTRDLESEESASDAGSCLDEDYSSGDEKLEEEYKTKILSFLQDASLDELYLIPHCSHKKAQKITELRPFSSWESLFEKMTKSNGLSEDLIWDCQTLIKEREVVMKLMNKCEEISRTLTKQVTQLTEDGECGWNIEQPSIMSENLVLKPYQKIGLNWLALLHKHKVNMILADEMGLGKTVQAIAFLAHLYVTGDSGPHLVVVPASTMDNWIREFNQWCPSMNILLYYGSQEERKHLRYDILNKVVEFNVIVTTYNCAISSAEDRSLFRRLKLNFAVFDEGHMLKNMSAIRYQHLMTLNARSRLLLTGTPVQNNLLELMSLLNFVMPHMFSSSTSEIKRLFSSKAKSTDEQTIFEKERIAHAKQIMKPFILRRVKSEVLKQLPPKQDKIKFCQMSKKQEQLYSDLLNKLKKSIDATEKNSELCNVMMHLRKMANHPLLHRQYYTADRLRTMSKLMLKEPTHCDANPDLIFEDMEVMTDFELHRLCNEFTTLSQYKLEKELILDSGKFNILEKLLSDIKKKGDRVVLFSQFTMMLDIIEVFLRHHQHRYVRLDGKTQISERIHLIDEFNTDMDIFIFLLSTKAGGLGINLTSANIVILHDIDCNPYNDKQAEDRCHRVGQTKEVKVIKLIGKGTIEESMLKISQQKLRLEQDMTTNDTGDEGTIPLDMATLLKTSLGL</sequence>